<organism>
    <name type="scientific">Mycobacterium leprae (strain TN)</name>
    <dbReference type="NCBI Taxonomy" id="272631"/>
    <lineage>
        <taxon>Bacteria</taxon>
        <taxon>Bacillati</taxon>
        <taxon>Actinomycetota</taxon>
        <taxon>Actinomycetes</taxon>
        <taxon>Mycobacteriales</taxon>
        <taxon>Mycobacteriaceae</taxon>
        <taxon>Mycobacterium</taxon>
    </lineage>
</organism>
<name>ETFB_MYCLE</name>
<evidence type="ECO:0000250" key="1"/>
<evidence type="ECO:0000305" key="2"/>
<sequence length="266" mass="28160">MTNIVVLIKQVPDTWSERKLTDGDFTLDREAADAVLDEINERAVEEALQIREKEAVDGIKGSVTVLTAGPERATEAIRKALSMGADKAVHLKDDGMHGSDVIQTGWALARALGTIEGTELVIAGNESTDGVGGVVPAIIAEYLGLPQLTHLRTISVEGGKITGERETDEGVFTLEAVLPAVVSVNEKINEPRFPSFKGIMAAKKKEVTVLTLAEIGVEVDEVGLANAGSKVLVSTPKPAKTAGEKITDEGDGGNQIVQYLVAQKII</sequence>
<comment type="function">
    <text evidence="1">The electron transfer flavoprotein serves as a specific electron acceptor for other dehydrogenases. It transfers the electrons to the main respiratory chain via ETF-ubiquinone oxidoreductase (ETF dehydrogenase) (By similarity).</text>
</comment>
<comment type="cofactor">
    <cofactor evidence="1">
        <name>FAD</name>
        <dbReference type="ChEBI" id="CHEBI:57692"/>
    </cofactor>
    <text evidence="1">Binds 1 FAD per dimer.</text>
</comment>
<comment type="cofactor">
    <cofactor evidence="1">
        <name>AMP</name>
        <dbReference type="ChEBI" id="CHEBI:456215"/>
    </cofactor>
    <text evidence="1">Binds 1 AMP per subunit.</text>
</comment>
<comment type="subunit">
    <text>Heterodimer of an alpha and a beta subunit.</text>
</comment>
<comment type="similarity">
    <text evidence="2">Belongs to the ETF beta-subunit/FixA family.</text>
</comment>
<gene>
    <name type="primary">etfB</name>
    <name type="synonym">fixA</name>
    <name type="ordered locus">ML1712</name>
    <name type="ORF">MLCB637.03</name>
</gene>
<dbReference type="EMBL" id="Z99263">
    <property type="protein sequence ID" value="CAB16418.1"/>
    <property type="molecule type" value="Genomic_DNA"/>
</dbReference>
<dbReference type="EMBL" id="AL583923">
    <property type="protein sequence ID" value="CAC30665.1"/>
    <property type="molecule type" value="Genomic_DNA"/>
</dbReference>
<dbReference type="PIR" id="T45396">
    <property type="entry name" value="T45396"/>
</dbReference>
<dbReference type="RefSeq" id="NP_302179.1">
    <property type="nucleotide sequence ID" value="NC_002677.1"/>
</dbReference>
<dbReference type="RefSeq" id="WP_010908500.1">
    <property type="nucleotide sequence ID" value="NC_002677.1"/>
</dbReference>
<dbReference type="SMR" id="O33095"/>
<dbReference type="STRING" id="272631.gene:17575557"/>
<dbReference type="KEGG" id="mle:ML1712"/>
<dbReference type="PATRIC" id="fig|272631.5.peg.3225"/>
<dbReference type="Leproma" id="ML1712"/>
<dbReference type="eggNOG" id="COG2086">
    <property type="taxonomic scope" value="Bacteria"/>
</dbReference>
<dbReference type="HOGENOM" id="CLU_060196_2_0_11"/>
<dbReference type="OrthoDB" id="9804960at2"/>
<dbReference type="Proteomes" id="UP000000806">
    <property type="component" value="Chromosome"/>
</dbReference>
<dbReference type="GO" id="GO:0005829">
    <property type="term" value="C:cytosol"/>
    <property type="evidence" value="ECO:0007669"/>
    <property type="project" value="TreeGrafter"/>
</dbReference>
<dbReference type="GO" id="GO:0009055">
    <property type="term" value="F:electron transfer activity"/>
    <property type="evidence" value="ECO:0007669"/>
    <property type="project" value="InterPro"/>
</dbReference>
<dbReference type="CDD" id="cd01714">
    <property type="entry name" value="ETF_beta"/>
    <property type="match status" value="1"/>
</dbReference>
<dbReference type="FunFam" id="3.40.50.620:FF:000086">
    <property type="entry name" value="Electron transfer flavoprotein subunit beta"/>
    <property type="match status" value="1"/>
</dbReference>
<dbReference type="Gene3D" id="3.40.50.620">
    <property type="entry name" value="HUPs"/>
    <property type="match status" value="1"/>
</dbReference>
<dbReference type="InterPro" id="IPR000049">
    <property type="entry name" value="ET-Flavoprotein_bsu_CS"/>
</dbReference>
<dbReference type="InterPro" id="IPR014730">
    <property type="entry name" value="ETF_a/b_N"/>
</dbReference>
<dbReference type="InterPro" id="IPR012255">
    <property type="entry name" value="ETF_b"/>
</dbReference>
<dbReference type="InterPro" id="IPR033948">
    <property type="entry name" value="ETF_beta_N"/>
</dbReference>
<dbReference type="InterPro" id="IPR014729">
    <property type="entry name" value="Rossmann-like_a/b/a_fold"/>
</dbReference>
<dbReference type="PANTHER" id="PTHR21294">
    <property type="entry name" value="ELECTRON TRANSFER FLAVOPROTEIN BETA-SUBUNIT"/>
    <property type="match status" value="1"/>
</dbReference>
<dbReference type="PANTHER" id="PTHR21294:SF8">
    <property type="entry name" value="ELECTRON TRANSFER FLAVOPROTEIN SUBUNIT BETA"/>
    <property type="match status" value="1"/>
</dbReference>
<dbReference type="Pfam" id="PF01012">
    <property type="entry name" value="ETF"/>
    <property type="match status" value="1"/>
</dbReference>
<dbReference type="PIRSF" id="PIRSF000090">
    <property type="entry name" value="Beta-ETF"/>
    <property type="match status" value="1"/>
</dbReference>
<dbReference type="SMART" id="SM00893">
    <property type="entry name" value="ETF"/>
    <property type="match status" value="1"/>
</dbReference>
<dbReference type="SUPFAM" id="SSF52402">
    <property type="entry name" value="Adenine nucleotide alpha hydrolases-like"/>
    <property type="match status" value="1"/>
</dbReference>
<dbReference type="PROSITE" id="PS01065">
    <property type="entry name" value="ETF_BETA"/>
    <property type="match status" value="1"/>
</dbReference>
<reference key="1">
    <citation type="journal article" date="2001" name="Nature">
        <title>Massive gene decay in the leprosy bacillus.</title>
        <authorList>
            <person name="Cole S.T."/>
            <person name="Eiglmeier K."/>
            <person name="Parkhill J."/>
            <person name="James K.D."/>
            <person name="Thomson N.R."/>
            <person name="Wheeler P.R."/>
            <person name="Honore N."/>
            <person name="Garnier T."/>
            <person name="Churcher C.M."/>
            <person name="Harris D.E."/>
            <person name="Mungall K.L."/>
            <person name="Basham D."/>
            <person name="Brown D."/>
            <person name="Chillingworth T."/>
            <person name="Connor R."/>
            <person name="Davies R.M."/>
            <person name="Devlin K."/>
            <person name="Duthoy S."/>
            <person name="Feltwell T."/>
            <person name="Fraser A."/>
            <person name="Hamlin N."/>
            <person name="Holroyd S."/>
            <person name="Hornsby T."/>
            <person name="Jagels K."/>
            <person name="Lacroix C."/>
            <person name="Maclean J."/>
            <person name="Moule S."/>
            <person name="Murphy L.D."/>
            <person name="Oliver K."/>
            <person name="Quail M.A."/>
            <person name="Rajandream M.A."/>
            <person name="Rutherford K.M."/>
            <person name="Rutter S."/>
            <person name="Seeger K."/>
            <person name="Simon S."/>
            <person name="Simmonds M."/>
            <person name="Skelton J."/>
            <person name="Squares R."/>
            <person name="Squares S."/>
            <person name="Stevens K."/>
            <person name="Taylor K."/>
            <person name="Whitehead S."/>
            <person name="Woodward J.R."/>
            <person name="Barrell B.G."/>
        </authorList>
    </citation>
    <scope>NUCLEOTIDE SEQUENCE [LARGE SCALE GENOMIC DNA]</scope>
    <source>
        <strain>TN</strain>
    </source>
</reference>
<accession>O33095</accession>
<feature type="chain" id="PRO_0000167881" description="Electron transfer flavoprotein subunit beta">
    <location>
        <begin position="1"/>
        <end position="266"/>
    </location>
</feature>
<protein>
    <recommendedName>
        <fullName>Electron transfer flavoprotein subunit beta</fullName>
        <shortName>Beta-ETF</shortName>
    </recommendedName>
    <alternativeName>
        <fullName>Electron transfer flavoprotein small subunit</fullName>
        <shortName>ETFSS</shortName>
    </alternativeName>
</protein>
<keyword id="KW-0249">Electron transport</keyword>
<keyword id="KW-0274">FAD</keyword>
<keyword id="KW-0285">Flavoprotein</keyword>
<keyword id="KW-1185">Reference proteome</keyword>
<keyword id="KW-0813">Transport</keyword>
<proteinExistence type="inferred from homology"/>